<dbReference type="EC" id="3.1.1.-" evidence="5"/>
<dbReference type="EMBL" id="AL123456">
    <property type="protein sequence ID" value="CCP45066.1"/>
    <property type="molecule type" value="Genomic_DNA"/>
</dbReference>
<dbReference type="RefSeq" id="NP_216800.1">
    <property type="nucleotide sequence ID" value="NC_000962.3"/>
</dbReference>
<dbReference type="RefSeq" id="WP_003899248.1">
    <property type="nucleotide sequence ID" value="NZ_NVQJ01000012.1"/>
</dbReference>
<dbReference type="SMR" id="Q50681"/>
<dbReference type="FunCoup" id="Q50681">
    <property type="interactions" value="77"/>
</dbReference>
<dbReference type="STRING" id="83332.Rv2284"/>
<dbReference type="ChEMBL" id="CHEMBL4105753"/>
<dbReference type="ESTHER" id="myctu-Rv2284">
    <property type="family name" value="BD-FAE"/>
</dbReference>
<dbReference type="PaxDb" id="83332-Rv2284"/>
<dbReference type="DNASU" id="887794"/>
<dbReference type="GeneID" id="887794"/>
<dbReference type="KEGG" id="mtu:Rv2284"/>
<dbReference type="KEGG" id="mtv:RVBD_2284"/>
<dbReference type="PATRIC" id="fig|83332.111.peg.2539"/>
<dbReference type="TubercuList" id="Rv2284"/>
<dbReference type="eggNOG" id="COG0657">
    <property type="taxonomic scope" value="Bacteria"/>
</dbReference>
<dbReference type="InParanoid" id="Q50681"/>
<dbReference type="OrthoDB" id="9803828at2"/>
<dbReference type="PhylomeDB" id="Q50681"/>
<dbReference type="Proteomes" id="UP000001584">
    <property type="component" value="Chromosome"/>
</dbReference>
<dbReference type="GO" id="GO:0005576">
    <property type="term" value="C:extracellular region"/>
    <property type="evidence" value="ECO:0007005"/>
    <property type="project" value="MTBBASE"/>
</dbReference>
<dbReference type="GO" id="GO:0005886">
    <property type="term" value="C:plasma membrane"/>
    <property type="evidence" value="ECO:0007005"/>
    <property type="project" value="MTBBASE"/>
</dbReference>
<dbReference type="GO" id="GO:0016787">
    <property type="term" value="F:hydrolase activity"/>
    <property type="evidence" value="ECO:0007669"/>
    <property type="project" value="UniProtKB-KW"/>
</dbReference>
<dbReference type="GO" id="GO:0052167">
    <property type="term" value="P:symbiont-mediated perturbation of host innate immune response"/>
    <property type="evidence" value="ECO:0000314"/>
    <property type="project" value="MTBBASE"/>
</dbReference>
<dbReference type="FunFam" id="3.40.50.1820:FF:000135">
    <property type="entry name" value="Esterase lipC"/>
    <property type="match status" value="1"/>
</dbReference>
<dbReference type="Gene3D" id="3.40.50.1820">
    <property type="entry name" value="alpha/beta hydrolase"/>
    <property type="match status" value="1"/>
</dbReference>
<dbReference type="InterPro" id="IPR029058">
    <property type="entry name" value="AB_hydrolase_fold"/>
</dbReference>
<dbReference type="InterPro" id="IPR049492">
    <property type="entry name" value="BD-FAE-like_dom"/>
</dbReference>
<dbReference type="InterPro" id="IPR050300">
    <property type="entry name" value="GDXG_lipolytic_enzyme"/>
</dbReference>
<dbReference type="PANTHER" id="PTHR48081">
    <property type="entry name" value="AB HYDROLASE SUPERFAMILY PROTEIN C4A8.06C"/>
    <property type="match status" value="1"/>
</dbReference>
<dbReference type="PANTHER" id="PTHR48081:SF33">
    <property type="entry name" value="KYNURENINE FORMAMIDASE"/>
    <property type="match status" value="1"/>
</dbReference>
<dbReference type="Pfam" id="PF20434">
    <property type="entry name" value="BD-FAE"/>
    <property type="match status" value="1"/>
</dbReference>
<dbReference type="SUPFAM" id="SSF53474">
    <property type="entry name" value="alpha/beta-Hydrolases"/>
    <property type="match status" value="1"/>
</dbReference>
<protein>
    <recommendedName>
        <fullName evidence="5">Probable carboxylic ester hydrolase LipM</fullName>
        <ecNumber evidence="5">3.1.1.-</ecNumber>
    </recommendedName>
</protein>
<comment type="subcellular location">
    <subcellularLocation>
        <location evidence="2">Membrane</location>
        <topology evidence="2">Multi-pass membrane protein</topology>
    </subcellularLocation>
</comment>
<comment type="developmental stage">
    <text evidence="3">Remains active in dormant M.tuberculosis.</text>
</comment>
<comment type="similarity">
    <text evidence="5">Belongs to the 'GDXG' lipolytic enzyme family.</text>
</comment>
<organism>
    <name type="scientific">Mycobacterium tuberculosis (strain ATCC 25618 / H37Rv)</name>
    <dbReference type="NCBI Taxonomy" id="83332"/>
    <lineage>
        <taxon>Bacteria</taxon>
        <taxon>Bacillati</taxon>
        <taxon>Actinomycetota</taxon>
        <taxon>Actinomycetes</taxon>
        <taxon>Mycobacteriales</taxon>
        <taxon>Mycobacteriaceae</taxon>
        <taxon>Mycobacterium</taxon>
        <taxon>Mycobacterium tuberculosis complex</taxon>
    </lineage>
</organism>
<proteinExistence type="evidence at protein level"/>
<reference key="1">
    <citation type="journal article" date="1998" name="Nature">
        <title>Deciphering the biology of Mycobacterium tuberculosis from the complete genome sequence.</title>
        <authorList>
            <person name="Cole S.T."/>
            <person name="Brosch R."/>
            <person name="Parkhill J."/>
            <person name="Garnier T."/>
            <person name="Churcher C.M."/>
            <person name="Harris D.E."/>
            <person name="Gordon S.V."/>
            <person name="Eiglmeier K."/>
            <person name="Gas S."/>
            <person name="Barry C.E. III"/>
            <person name="Tekaia F."/>
            <person name="Badcock K."/>
            <person name="Basham D."/>
            <person name="Brown D."/>
            <person name="Chillingworth T."/>
            <person name="Connor R."/>
            <person name="Davies R.M."/>
            <person name="Devlin K."/>
            <person name="Feltwell T."/>
            <person name="Gentles S."/>
            <person name="Hamlin N."/>
            <person name="Holroyd S."/>
            <person name="Hornsby T."/>
            <person name="Jagels K."/>
            <person name="Krogh A."/>
            <person name="McLean J."/>
            <person name="Moule S."/>
            <person name="Murphy L.D."/>
            <person name="Oliver S."/>
            <person name="Osborne J."/>
            <person name="Quail M.A."/>
            <person name="Rajandream M.A."/>
            <person name="Rogers J."/>
            <person name="Rutter S."/>
            <person name="Seeger K."/>
            <person name="Skelton S."/>
            <person name="Squares S."/>
            <person name="Squares R."/>
            <person name="Sulston J.E."/>
            <person name="Taylor K."/>
            <person name="Whitehead S."/>
            <person name="Barrell B.G."/>
        </authorList>
    </citation>
    <scope>NUCLEOTIDE SEQUENCE [LARGE SCALE GENOMIC DNA]</scope>
    <source>
        <strain>ATCC 25618 / H37Rv</strain>
    </source>
</reference>
<reference evidence="7" key="2">
    <citation type="journal article" date="2011" name="Mol. Cell. Proteomics">
        <title>Proteogenomic analysis of Mycobacterium tuberculosis by high resolution mass spectrometry.</title>
        <authorList>
            <person name="Kelkar D.S."/>
            <person name="Kumar D."/>
            <person name="Kumar P."/>
            <person name="Balakrishnan L."/>
            <person name="Muthusamy B."/>
            <person name="Yadav A.K."/>
            <person name="Shrivastava P."/>
            <person name="Marimuthu A."/>
            <person name="Anand S."/>
            <person name="Sundaram H."/>
            <person name="Kingsbury R."/>
            <person name="Harsha H.C."/>
            <person name="Nair B."/>
            <person name="Prasad T.S."/>
            <person name="Chauhan D.S."/>
            <person name="Katoch K."/>
            <person name="Katoch V.M."/>
            <person name="Kumar P."/>
            <person name="Chaerkady R."/>
            <person name="Ramachandran S."/>
            <person name="Dash D."/>
            <person name="Pandey A."/>
        </authorList>
    </citation>
    <scope>IDENTIFICATION BY MASS SPECTROMETRY [LARGE SCALE ANALYSIS]</scope>
</reference>
<reference key="3">
    <citation type="journal article" date="2016" name="ACS Infect. Dis.">
        <title>Small-molecule probes reveal esterases with persistent activity in dormant and reactivating Mycobacterium tuberculosis.</title>
        <authorList>
            <person name="Tallman K.R."/>
            <person name="Levine S.R."/>
            <person name="Beatty K.E."/>
        </authorList>
    </citation>
    <scope>DEVELOPMENTAL STAGE</scope>
</reference>
<accession>Q50681</accession>
<accession>F2GJ96</accession>
<accession>I6Y0D6</accession>
<accession>Q7D7C4</accession>
<evidence type="ECO:0000250" key="1">
    <source>
        <dbReference type="UniProtKB" id="O06350"/>
    </source>
</evidence>
<evidence type="ECO:0000255" key="2"/>
<evidence type="ECO:0000269" key="3">
    <source>
    </source>
</evidence>
<evidence type="ECO:0000303" key="4">
    <source>
    </source>
</evidence>
<evidence type="ECO:0000305" key="5"/>
<evidence type="ECO:0000312" key="6">
    <source>
        <dbReference type="EMBL" id="CCP45066.1"/>
    </source>
</evidence>
<evidence type="ECO:0007744" key="7">
    <source>
    </source>
</evidence>
<keyword id="KW-0378">Hydrolase</keyword>
<keyword id="KW-0472">Membrane</keyword>
<keyword id="KW-1185">Reference proteome</keyword>
<keyword id="KW-0812">Transmembrane</keyword>
<keyword id="KW-1133">Transmembrane helix</keyword>
<name>LIPM_MYCTU</name>
<feature type="chain" id="PRO_0000448852" description="Probable carboxylic ester hydrolase LipM">
    <location>
        <begin position="1"/>
        <end position="431"/>
    </location>
</feature>
<feature type="transmembrane region" description="Helical" evidence="2">
    <location>
        <begin position="7"/>
        <end position="27"/>
    </location>
</feature>
<feature type="transmembrane region" description="Helical" evidence="2">
    <location>
        <begin position="38"/>
        <end position="58"/>
    </location>
</feature>
<feature type="transmembrane region" description="Helical" evidence="2">
    <location>
        <begin position="75"/>
        <end position="95"/>
    </location>
</feature>
<feature type="active site" evidence="1">
    <location>
        <position position="261"/>
    </location>
</feature>
<feature type="active site" evidence="1">
    <location>
        <position position="357"/>
    </location>
</feature>
<feature type="active site" evidence="1">
    <location>
        <position position="390"/>
    </location>
</feature>
<sequence>MGAPRLIHVIRQIGALVVAAVTAAATINAYRPLARNGFASLWSWFIGLVVTEFPLPTLASQLGGLVLTAQRLTRPVRAVSWLVAAFSALGLLNLSRAGRQADAQLTAALDSGLGPDRRTASAGLWRRPAGGGTAKTPGPLRMLRIYRDYAHDGDISYGEYGRANHLDIWRRPDLDLTGTAPVLFQIPGGAWTTGNKRGQAHPLMSHLAELGWICVAINYRHSPRNTWPDHIIDVKRALAWVKAHISEYGGDPDFIAITGGSAGGHLSSLAALTPNDPRFQPGFEEADTRVQAAVPFYGVYDFTRLQDAMHPMMLPLLERMVVKQPRTANMQSYLDASPVTHISADAPPFFVLHGRNDSLVPVQQARGFVDQLRQVSKQPVVYAELPFTQHAFDLLGSARAAHTAIAVEQFLAEVYATQHAGSEPGPAVAIP</sequence>
<gene>
    <name evidence="4" type="primary">lipM</name>
    <name evidence="6" type="ordered locus">Rv2284</name>
</gene>